<sequence>MNELTIAMPKGRIFEEAYQMLLKAGFHLPEEVEMSRKLMIEIPEEKIRFILSKPMDVPVYVEHGVADIGIAGKDVLLEQQREVHELLDLNISNCYIASAGLPNTDMNEIAPRIATKYPNIAMKYYKGIGEQVEIIELNGSIELAPMIGLADRIVDIVSTGRTLKENGLVEYEFISTVSSRLIANPVSYRMKGERIIDLVRRLKKCVNEQKSNHI</sequence>
<organism>
    <name type="scientific">Lysinibacillus sphaericus (strain C3-41)</name>
    <dbReference type="NCBI Taxonomy" id="444177"/>
    <lineage>
        <taxon>Bacteria</taxon>
        <taxon>Bacillati</taxon>
        <taxon>Bacillota</taxon>
        <taxon>Bacilli</taxon>
        <taxon>Bacillales</taxon>
        <taxon>Bacillaceae</taxon>
        <taxon>Lysinibacillus</taxon>
    </lineage>
</organism>
<accession>B1HVP7</accession>
<feature type="chain" id="PRO_1000213274" description="ATP phosphoribosyltransferase">
    <location>
        <begin position="1"/>
        <end position="214"/>
    </location>
</feature>
<proteinExistence type="inferred from homology"/>
<dbReference type="EC" id="2.4.2.17" evidence="1"/>
<dbReference type="EMBL" id="CP000817">
    <property type="protein sequence ID" value="ACA38066.1"/>
    <property type="molecule type" value="Genomic_DNA"/>
</dbReference>
<dbReference type="RefSeq" id="WP_012292223.1">
    <property type="nucleotide sequence ID" value="NC_010382.1"/>
</dbReference>
<dbReference type="SMR" id="B1HVP7"/>
<dbReference type="EnsemblBacteria" id="ACA38066">
    <property type="protein sequence ID" value="ACA38066"/>
    <property type="gene ID" value="Bsph_0439"/>
</dbReference>
<dbReference type="KEGG" id="lsp:Bsph_0439"/>
<dbReference type="HOGENOM" id="CLU_038115_2_0_9"/>
<dbReference type="UniPathway" id="UPA00031">
    <property type="reaction ID" value="UER00006"/>
</dbReference>
<dbReference type="Proteomes" id="UP000002164">
    <property type="component" value="Chromosome"/>
</dbReference>
<dbReference type="GO" id="GO:0005737">
    <property type="term" value="C:cytoplasm"/>
    <property type="evidence" value="ECO:0007669"/>
    <property type="project" value="UniProtKB-SubCell"/>
</dbReference>
<dbReference type="GO" id="GO:0005524">
    <property type="term" value="F:ATP binding"/>
    <property type="evidence" value="ECO:0007669"/>
    <property type="project" value="UniProtKB-KW"/>
</dbReference>
<dbReference type="GO" id="GO:0003879">
    <property type="term" value="F:ATP phosphoribosyltransferase activity"/>
    <property type="evidence" value="ECO:0007669"/>
    <property type="project" value="UniProtKB-UniRule"/>
</dbReference>
<dbReference type="GO" id="GO:0000105">
    <property type="term" value="P:L-histidine biosynthetic process"/>
    <property type="evidence" value="ECO:0007669"/>
    <property type="project" value="UniProtKB-UniRule"/>
</dbReference>
<dbReference type="CDD" id="cd13595">
    <property type="entry name" value="PBP2_HisGs"/>
    <property type="match status" value="1"/>
</dbReference>
<dbReference type="FunFam" id="3.40.190.10:FF:000008">
    <property type="entry name" value="ATP phosphoribosyltransferase"/>
    <property type="match status" value="1"/>
</dbReference>
<dbReference type="FunFam" id="3.40.190.10:FF:000011">
    <property type="entry name" value="ATP phosphoribosyltransferase"/>
    <property type="match status" value="1"/>
</dbReference>
<dbReference type="Gene3D" id="3.40.190.10">
    <property type="entry name" value="Periplasmic binding protein-like II"/>
    <property type="match status" value="2"/>
</dbReference>
<dbReference type="HAMAP" id="MF_01018">
    <property type="entry name" value="HisG_Short"/>
    <property type="match status" value="1"/>
</dbReference>
<dbReference type="InterPro" id="IPR013820">
    <property type="entry name" value="ATP_PRibTrfase_cat"/>
</dbReference>
<dbReference type="InterPro" id="IPR018198">
    <property type="entry name" value="ATP_PRibTrfase_CS"/>
</dbReference>
<dbReference type="InterPro" id="IPR001348">
    <property type="entry name" value="ATP_PRibTrfase_HisG"/>
</dbReference>
<dbReference type="InterPro" id="IPR024893">
    <property type="entry name" value="ATP_PRibTrfase_HisG_short"/>
</dbReference>
<dbReference type="NCBIfam" id="TIGR00070">
    <property type="entry name" value="hisG"/>
    <property type="match status" value="1"/>
</dbReference>
<dbReference type="PANTHER" id="PTHR21403:SF8">
    <property type="entry name" value="ATP PHOSPHORIBOSYLTRANSFERASE"/>
    <property type="match status" value="1"/>
</dbReference>
<dbReference type="PANTHER" id="PTHR21403">
    <property type="entry name" value="ATP PHOSPHORIBOSYLTRANSFERASE ATP-PRTASE"/>
    <property type="match status" value="1"/>
</dbReference>
<dbReference type="Pfam" id="PF01634">
    <property type="entry name" value="HisG"/>
    <property type="match status" value="1"/>
</dbReference>
<dbReference type="SUPFAM" id="SSF53850">
    <property type="entry name" value="Periplasmic binding protein-like II"/>
    <property type="match status" value="1"/>
</dbReference>
<dbReference type="PROSITE" id="PS01316">
    <property type="entry name" value="ATP_P_PHORIBOSYLTR"/>
    <property type="match status" value="1"/>
</dbReference>
<comment type="function">
    <text evidence="1">Catalyzes the condensation of ATP and 5-phosphoribose 1-diphosphate to form N'-(5'-phosphoribosyl)-ATP (PR-ATP). Has a crucial role in the pathway because the rate of histidine biosynthesis seems to be controlled primarily by regulation of HisG enzymatic activity.</text>
</comment>
<comment type="catalytic activity">
    <reaction evidence="1">
        <text>1-(5-phospho-beta-D-ribosyl)-ATP + diphosphate = 5-phospho-alpha-D-ribose 1-diphosphate + ATP</text>
        <dbReference type="Rhea" id="RHEA:18473"/>
        <dbReference type="ChEBI" id="CHEBI:30616"/>
        <dbReference type="ChEBI" id="CHEBI:33019"/>
        <dbReference type="ChEBI" id="CHEBI:58017"/>
        <dbReference type="ChEBI" id="CHEBI:73183"/>
        <dbReference type="EC" id="2.4.2.17"/>
    </reaction>
</comment>
<comment type="pathway">
    <text evidence="1">Amino-acid biosynthesis; L-histidine biosynthesis; L-histidine from 5-phospho-alpha-D-ribose 1-diphosphate: step 1/9.</text>
</comment>
<comment type="subunit">
    <text evidence="1">Heteromultimer composed of HisG and HisZ subunits.</text>
</comment>
<comment type="subcellular location">
    <subcellularLocation>
        <location evidence="1">Cytoplasm</location>
    </subcellularLocation>
</comment>
<comment type="domain">
    <text>Lacks the C-terminal regulatory region which is replaced by HisZ.</text>
</comment>
<comment type="similarity">
    <text evidence="1">Belongs to the ATP phosphoribosyltransferase family. Short subfamily.</text>
</comment>
<protein>
    <recommendedName>
        <fullName evidence="1">ATP phosphoribosyltransferase</fullName>
        <shortName evidence="1">ATP-PRT</shortName>
        <shortName evidence="1">ATP-PRTase</shortName>
        <ecNumber evidence="1">2.4.2.17</ecNumber>
    </recommendedName>
</protein>
<name>HIS1_LYSSC</name>
<keyword id="KW-0028">Amino-acid biosynthesis</keyword>
<keyword id="KW-0067">ATP-binding</keyword>
<keyword id="KW-0963">Cytoplasm</keyword>
<keyword id="KW-0328">Glycosyltransferase</keyword>
<keyword id="KW-0368">Histidine biosynthesis</keyword>
<keyword id="KW-0547">Nucleotide-binding</keyword>
<keyword id="KW-0808">Transferase</keyword>
<evidence type="ECO:0000255" key="1">
    <source>
        <dbReference type="HAMAP-Rule" id="MF_01018"/>
    </source>
</evidence>
<gene>
    <name evidence="1" type="primary">hisG</name>
    <name type="ordered locus">Bsph_0439</name>
</gene>
<reference key="1">
    <citation type="journal article" date="2008" name="J. Bacteriol.">
        <title>Complete genome sequence of the mosquitocidal bacterium Bacillus sphaericus C3-41 and comparison with those of closely related Bacillus species.</title>
        <authorList>
            <person name="Hu X."/>
            <person name="Fan W."/>
            <person name="Han B."/>
            <person name="Liu H."/>
            <person name="Zheng D."/>
            <person name="Li Q."/>
            <person name="Dong W."/>
            <person name="Yan J."/>
            <person name="Gao M."/>
            <person name="Berry C."/>
            <person name="Yuan Z."/>
        </authorList>
    </citation>
    <scope>NUCLEOTIDE SEQUENCE [LARGE SCALE GENOMIC DNA]</scope>
    <source>
        <strain>C3-41</strain>
    </source>
</reference>